<sequence length="473" mass="52881">MAPSLSTAVSSLLLLLLLAAAISVSSSPPMPEDSIRVISAEKRIDLTSPIVKVFLTLKLENDATAPEASQVLLAFTPTEVEHLAIVKATRAEGKRKKKIYVPLSVKASDLAAAPNGARLYSILLSTPLKPAEVTTLEVFYALTHSLEPFPAEITQSDPQLVYYRDSAVLLSPYHVLEQVTYIKMPSNRVESFTRVDPTSRAGNEVKYGAYNNQLPNSYVPILVHYENNRPFAVVEEFVRKVEISHWGNVQITEQYKLKHGGAQHKGVFSRLEYQSRPSISGVSSFKNLLARLPPRVHSVYYRDEIGNISSSHLRSDSHKSELEIEPRYPLFGGWHCTFTIGYGLPLQDFLFESDDGRRYINLTFGCPLLDTVVDDLTIKVVLPEGSTSPQAVVPFLMEQYLETSYSYLDVVGRTTVVLKKRNVVGEHNVPFQVYYEFNPIFMLAEPLMLISAVFLFFVACIAYLHMDLSIGKS</sequence>
<organism>
    <name type="scientific">Oryza sativa subsp. japonica</name>
    <name type="common">Rice</name>
    <dbReference type="NCBI Taxonomy" id="39947"/>
    <lineage>
        <taxon>Eukaryota</taxon>
        <taxon>Viridiplantae</taxon>
        <taxon>Streptophyta</taxon>
        <taxon>Embryophyta</taxon>
        <taxon>Tracheophyta</taxon>
        <taxon>Spermatophyta</taxon>
        <taxon>Magnoliopsida</taxon>
        <taxon>Liliopsida</taxon>
        <taxon>Poales</taxon>
        <taxon>Poaceae</taxon>
        <taxon>BOP clade</taxon>
        <taxon>Oryzoideae</taxon>
        <taxon>Oryzeae</taxon>
        <taxon>Oryzinae</taxon>
        <taxon>Oryza</taxon>
        <taxon>Oryza sativa</taxon>
    </lineage>
</organism>
<feature type="signal peptide" evidence="3">
    <location>
        <begin position="1"/>
        <end position="27"/>
    </location>
</feature>
<feature type="chain" id="PRO_0000420810" description="Dolichyl-diphosphooligosaccharide--protein glycosyltransferase subunit 1B">
    <location>
        <begin position="28"/>
        <end position="473"/>
    </location>
</feature>
<feature type="topological domain" description="Lumenal" evidence="3">
    <location>
        <begin position="28"/>
        <end position="439"/>
    </location>
</feature>
<feature type="transmembrane region" description="Helical" evidence="3">
    <location>
        <begin position="440"/>
        <end position="460"/>
    </location>
</feature>
<feature type="topological domain" description="Cytoplasmic" evidence="3">
    <location>
        <begin position="461"/>
        <end position="473"/>
    </location>
</feature>
<feature type="glycosylation site" description="N-linked (GlcNAc...) asparagine" evidence="3">
    <location>
        <position position="307"/>
    </location>
</feature>
<feature type="glycosylation site" description="N-linked (GlcNAc...) asparagine" evidence="3">
    <location>
        <position position="361"/>
    </location>
</feature>
<dbReference type="EMBL" id="AP008210">
    <property type="status" value="NOT_ANNOTATED_CDS"/>
    <property type="molecule type" value="Genomic_DNA"/>
</dbReference>
<dbReference type="EMBL" id="AP014960">
    <property type="status" value="NOT_ANNOTATED_CDS"/>
    <property type="molecule type" value="Genomic_DNA"/>
</dbReference>
<dbReference type="EMBL" id="CM000141">
    <property type="protein sequence ID" value="EEE61982.1"/>
    <property type="molecule type" value="Genomic_DNA"/>
</dbReference>
<dbReference type="EMBL" id="AK065083">
    <property type="status" value="NOT_ANNOTATED_CDS"/>
    <property type="molecule type" value="mRNA"/>
</dbReference>
<dbReference type="SMR" id="B9FDT1"/>
<dbReference type="FunCoup" id="B9FDT1">
    <property type="interactions" value="3564"/>
</dbReference>
<dbReference type="STRING" id="39947.B9FDT1"/>
<dbReference type="GlyCosmos" id="B9FDT1">
    <property type="glycosylation" value="2 sites, No reported glycans"/>
</dbReference>
<dbReference type="PaxDb" id="39947-B9FDT1"/>
<dbReference type="eggNOG" id="KOG2291">
    <property type="taxonomic scope" value="Eukaryota"/>
</dbReference>
<dbReference type="InParanoid" id="B9FDT1"/>
<dbReference type="OMA" id="THYTLGY"/>
<dbReference type="UniPathway" id="UPA00378"/>
<dbReference type="Proteomes" id="UP000000763">
    <property type="component" value="Chromosome 4"/>
</dbReference>
<dbReference type="Proteomes" id="UP000007752">
    <property type="component" value="Chromosome 4"/>
</dbReference>
<dbReference type="Proteomes" id="UP000059680">
    <property type="component" value="Chromosome 4"/>
</dbReference>
<dbReference type="GO" id="GO:0008250">
    <property type="term" value="C:oligosaccharyltransferase complex"/>
    <property type="evidence" value="ECO:0000318"/>
    <property type="project" value="GO_Central"/>
</dbReference>
<dbReference type="GO" id="GO:0018279">
    <property type="term" value="P:protein N-linked glycosylation via asparagine"/>
    <property type="evidence" value="ECO:0000318"/>
    <property type="project" value="GO_Central"/>
</dbReference>
<dbReference type="InterPro" id="IPR007676">
    <property type="entry name" value="Ribophorin_I"/>
</dbReference>
<dbReference type="PANTHER" id="PTHR21049:SF2">
    <property type="entry name" value="DOLICHYL-DIPHOSPHOOLIGOSACCHARIDE--PROTEIN GLYCOSYLTRANSFERASE SUBUNIT 1B"/>
    <property type="match status" value="1"/>
</dbReference>
<dbReference type="PANTHER" id="PTHR21049">
    <property type="entry name" value="RIBOPHORIN I"/>
    <property type="match status" value="1"/>
</dbReference>
<dbReference type="Pfam" id="PF04597">
    <property type="entry name" value="Ribophorin_I"/>
    <property type="match status" value="1"/>
</dbReference>
<accession>B9FDT1</accession>
<protein>
    <recommendedName>
        <fullName>Dolichyl-diphosphooligosaccharide--protein glycosyltransferase subunit 1B</fullName>
    </recommendedName>
    <alternativeName>
        <fullName>Ribophorin IB</fullName>
        <shortName>RPN-IB</shortName>
    </alternativeName>
    <alternativeName>
        <fullName>Ribophorin-1B</fullName>
    </alternativeName>
</protein>
<keyword id="KW-0256">Endoplasmic reticulum</keyword>
<keyword id="KW-0325">Glycoprotein</keyword>
<keyword id="KW-0472">Membrane</keyword>
<keyword id="KW-1185">Reference proteome</keyword>
<keyword id="KW-0732">Signal</keyword>
<keyword id="KW-0812">Transmembrane</keyword>
<keyword id="KW-1133">Transmembrane helix</keyword>
<proteinExistence type="evidence at transcript level"/>
<evidence type="ECO:0000250" key="1"/>
<evidence type="ECO:0000250" key="2">
    <source>
        <dbReference type="UniProtKB" id="P41543"/>
    </source>
</evidence>
<evidence type="ECO:0000255" key="3"/>
<evidence type="ECO:0000305" key="4"/>
<reference key="1">
    <citation type="journal article" date="2005" name="Nature">
        <title>The map-based sequence of the rice genome.</title>
        <authorList>
            <consortium name="International rice genome sequencing project (IRGSP)"/>
        </authorList>
    </citation>
    <scope>NUCLEOTIDE SEQUENCE [LARGE SCALE GENOMIC DNA]</scope>
    <source>
        <strain>cv. Nipponbare</strain>
    </source>
</reference>
<reference key="2">
    <citation type="journal article" date="2008" name="Nucleic Acids Res.">
        <title>The rice annotation project database (RAP-DB): 2008 update.</title>
        <authorList>
            <consortium name="The rice annotation project (RAP)"/>
        </authorList>
    </citation>
    <scope>GENOME REANNOTATION</scope>
    <source>
        <strain>cv. Nipponbare</strain>
    </source>
</reference>
<reference key="3">
    <citation type="journal article" date="2013" name="Rice">
        <title>Improvement of the Oryza sativa Nipponbare reference genome using next generation sequence and optical map data.</title>
        <authorList>
            <person name="Kawahara Y."/>
            <person name="de la Bastide M."/>
            <person name="Hamilton J.P."/>
            <person name="Kanamori H."/>
            <person name="McCombie W.R."/>
            <person name="Ouyang S."/>
            <person name="Schwartz D.C."/>
            <person name="Tanaka T."/>
            <person name="Wu J."/>
            <person name="Zhou S."/>
            <person name="Childs K.L."/>
            <person name="Davidson R.M."/>
            <person name="Lin H."/>
            <person name="Quesada-Ocampo L."/>
            <person name="Vaillancourt B."/>
            <person name="Sakai H."/>
            <person name="Lee S.S."/>
            <person name="Kim J."/>
            <person name="Numa H."/>
            <person name="Itoh T."/>
            <person name="Buell C.R."/>
            <person name="Matsumoto T."/>
        </authorList>
    </citation>
    <scope>GENOME REANNOTATION</scope>
    <source>
        <strain>cv. Nipponbare</strain>
    </source>
</reference>
<reference key="4">
    <citation type="journal article" date="2005" name="PLoS Biol.">
        <title>The genomes of Oryza sativa: a history of duplications.</title>
        <authorList>
            <person name="Yu J."/>
            <person name="Wang J."/>
            <person name="Lin W."/>
            <person name="Li S."/>
            <person name="Li H."/>
            <person name="Zhou J."/>
            <person name="Ni P."/>
            <person name="Dong W."/>
            <person name="Hu S."/>
            <person name="Zeng C."/>
            <person name="Zhang J."/>
            <person name="Zhang Y."/>
            <person name="Li R."/>
            <person name="Xu Z."/>
            <person name="Li S."/>
            <person name="Li X."/>
            <person name="Zheng H."/>
            <person name="Cong L."/>
            <person name="Lin L."/>
            <person name="Yin J."/>
            <person name="Geng J."/>
            <person name="Li G."/>
            <person name="Shi J."/>
            <person name="Liu J."/>
            <person name="Lv H."/>
            <person name="Li J."/>
            <person name="Wang J."/>
            <person name="Deng Y."/>
            <person name="Ran L."/>
            <person name="Shi X."/>
            <person name="Wang X."/>
            <person name="Wu Q."/>
            <person name="Li C."/>
            <person name="Ren X."/>
            <person name="Wang J."/>
            <person name="Wang X."/>
            <person name="Li D."/>
            <person name="Liu D."/>
            <person name="Zhang X."/>
            <person name="Ji Z."/>
            <person name="Zhao W."/>
            <person name="Sun Y."/>
            <person name="Zhang Z."/>
            <person name="Bao J."/>
            <person name="Han Y."/>
            <person name="Dong L."/>
            <person name="Ji J."/>
            <person name="Chen P."/>
            <person name="Wu S."/>
            <person name="Liu J."/>
            <person name="Xiao Y."/>
            <person name="Bu D."/>
            <person name="Tan J."/>
            <person name="Yang L."/>
            <person name="Ye C."/>
            <person name="Zhang J."/>
            <person name="Xu J."/>
            <person name="Zhou Y."/>
            <person name="Yu Y."/>
            <person name="Zhang B."/>
            <person name="Zhuang S."/>
            <person name="Wei H."/>
            <person name="Liu B."/>
            <person name="Lei M."/>
            <person name="Yu H."/>
            <person name="Li Y."/>
            <person name="Xu H."/>
            <person name="Wei S."/>
            <person name="He X."/>
            <person name="Fang L."/>
            <person name="Zhang Z."/>
            <person name="Zhang Y."/>
            <person name="Huang X."/>
            <person name="Su Z."/>
            <person name="Tong W."/>
            <person name="Li J."/>
            <person name="Tong Z."/>
            <person name="Li S."/>
            <person name="Ye J."/>
            <person name="Wang L."/>
            <person name="Fang L."/>
            <person name="Lei T."/>
            <person name="Chen C.-S."/>
            <person name="Chen H.-C."/>
            <person name="Xu Z."/>
            <person name="Li H."/>
            <person name="Huang H."/>
            <person name="Zhang F."/>
            <person name="Xu H."/>
            <person name="Li N."/>
            <person name="Zhao C."/>
            <person name="Li S."/>
            <person name="Dong L."/>
            <person name="Huang Y."/>
            <person name="Li L."/>
            <person name="Xi Y."/>
            <person name="Qi Q."/>
            <person name="Li W."/>
            <person name="Zhang B."/>
            <person name="Hu W."/>
            <person name="Zhang Y."/>
            <person name="Tian X."/>
            <person name="Jiao Y."/>
            <person name="Liang X."/>
            <person name="Jin J."/>
            <person name="Gao L."/>
            <person name="Zheng W."/>
            <person name="Hao B."/>
            <person name="Liu S.-M."/>
            <person name="Wang W."/>
            <person name="Yuan L."/>
            <person name="Cao M."/>
            <person name="McDermott J."/>
            <person name="Samudrala R."/>
            <person name="Wang J."/>
            <person name="Wong G.K.-S."/>
            <person name="Yang H."/>
        </authorList>
    </citation>
    <scope>NUCLEOTIDE SEQUENCE [LARGE SCALE GENOMIC DNA]</scope>
    <source>
        <strain>cv. Nipponbare</strain>
    </source>
</reference>
<reference key="5">
    <citation type="journal article" date="2003" name="Science">
        <title>Collection, mapping, and annotation of over 28,000 cDNA clones from japonica rice.</title>
        <authorList>
            <consortium name="The rice full-length cDNA consortium"/>
        </authorList>
    </citation>
    <scope>NUCLEOTIDE SEQUENCE [LARGE SCALE MRNA]</scope>
    <source>
        <strain>cv. Nipponbare</strain>
    </source>
</reference>
<name>OST1B_ORYSJ</name>
<gene>
    <name type="primary">OST1B</name>
    <name type="synonym">RPN1B</name>
    <name type="ordered locus">Os04g0693000</name>
    <name type="ORF">OsJ_16761</name>
</gene>
<comment type="function">
    <text evidence="2">Subunit of the oligosaccharyl transferase (OST) complex that catalyzes the initial transfer of a defined glycan (Glc(3)Man(9)GlcNAc(2) in eukaryotes) from the lipid carrier dolichol-pyrophosphate to an asparagine residue within an Asn-X-Ser/Thr consensus motif in nascent polypeptide chains, the first step in protein N-glycosylation. N-glycosylation occurs cotranslationally and the complex associates with the Sec61 complex at the channel-forming translocon complex that mediates protein translocation across the endoplasmic reticulum (ER). All subunits are required for a maximal enzyme activity.</text>
</comment>
<comment type="pathway">
    <text>Protein modification; protein glycosylation.</text>
</comment>
<comment type="subunit">
    <text evidence="2">Component of the oligosaccharyltransferase (OST) complex.</text>
</comment>
<comment type="subcellular location">
    <subcellularLocation>
        <location evidence="1">Endoplasmic reticulum membrane</location>
        <topology evidence="1">Single-pass type I membrane protein</topology>
    </subcellularLocation>
</comment>
<comment type="similarity">
    <text evidence="4">Belongs to the OST1 family.</text>
</comment>